<keyword id="KW-0028">Amino-acid biosynthesis</keyword>
<keyword id="KW-0963">Cytoplasm</keyword>
<keyword id="KW-0220">Diaminopimelate biosynthesis</keyword>
<keyword id="KW-0456">Lyase</keyword>
<keyword id="KW-0457">Lysine biosynthesis</keyword>
<keyword id="KW-0704">Schiff base</keyword>
<name>DAPA_META3</name>
<sequence>MQGVFPAIITPFKNGGVDYEGLEQNINFLIDNGVNGIVSVGTTGESPTLSHDEHKKIIEKSVSVCDGKVDVIAGAGSNSTEEAIALSQFAEDVGADSVLLITPYYNKPTQEGLKQHFSKIAESINIPIVLYNVPSRTAVNLQPETIKYLYEEYSNITTVKEANPDLSHISDVINSCDISVLSGNDELTLPVISLGGNGVISVVANIVPNEFVQMVNYANEGKFKEAREIHYKLFNLMKSLFIETNPVPIKTAMNLLNMPAGDLRLPLCKMEEENKFKLETALKEYGLL</sequence>
<gene>
    <name evidence="1" type="primary">dapA</name>
    <name type="ordered locus">Maeo_0908</name>
</gene>
<organism>
    <name type="scientific">Methanococcus aeolicus (strain ATCC BAA-1280 / DSM 17508 / OCM 812 / Nankai-3)</name>
    <dbReference type="NCBI Taxonomy" id="419665"/>
    <lineage>
        <taxon>Archaea</taxon>
        <taxon>Methanobacteriati</taxon>
        <taxon>Methanobacteriota</taxon>
        <taxon>Methanomada group</taxon>
        <taxon>Methanococci</taxon>
        <taxon>Methanococcales</taxon>
        <taxon>Methanococcaceae</taxon>
        <taxon>Methanococcus</taxon>
    </lineage>
</organism>
<feature type="chain" id="PRO_1000050212" description="4-hydroxy-tetrahydrodipicolinate synthase">
    <location>
        <begin position="1"/>
        <end position="288"/>
    </location>
</feature>
<feature type="active site" description="Proton donor/acceptor" evidence="1">
    <location>
        <position position="131"/>
    </location>
</feature>
<feature type="active site" description="Schiff-base intermediate with substrate" evidence="1">
    <location>
        <position position="160"/>
    </location>
</feature>
<feature type="binding site" evidence="1">
    <location>
        <position position="43"/>
    </location>
    <ligand>
        <name>pyruvate</name>
        <dbReference type="ChEBI" id="CHEBI:15361"/>
    </ligand>
</feature>
<feature type="binding site" evidence="1">
    <location>
        <position position="200"/>
    </location>
    <ligand>
        <name>pyruvate</name>
        <dbReference type="ChEBI" id="CHEBI:15361"/>
    </ligand>
</feature>
<feature type="site" description="Part of a proton relay during catalysis" evidence="1">
    <location>
        <position position="42"/>
    </location>
</feature>
<feature type="site" description="Part of a proton relay during catalysis" evidence="1">
    <location>
        <position position="105"/>
    </location>
</feature>
<evidence type="ECO:0000255" key="1">
    <source>
        <dbReference type="HAMAP-Rule" id="MF_00418"/>
    </source>
</evidence>
<evidence type="ECO:0000305" key="2"/>
<comment type="function">
    <text evidence="1">Catalyzes the condensation of (S)-aspartate-beta-semialdehyde [(S)-ASA] and pyruvate to 4-hydroxy-tetrahydrodipicolinate (HTPA).</text>
</comment>
<comment type="catalytic activity">
    <reaction evidence="1">
        <text>L-aspartate 4-semialdehyde + pyruvate = (2S,4S)-4-hydroxy-2,3,4,5-tetrahydrodipicolinate + H2O + H(+)</text>
        <dbReference type="Rhea" id="RHEA:34171"/>
        <dbReference type="ChEBI" id="CHEBI:15361"/>
        <dbReference type="ChEBI" id="CHEBI:15377"/>
        <dbReference type="ChEBI" id="CHEBI:15378"/>
        <dbReference type="ChEBI" id="CHEBI:67139"/>
        <dbReference type="ChEBI" id="CHEBI:537519"/>
        <dbReference type="EC" id="4.3.3.7"/>
    </reaction>
</comment>
<comment type="pathway">
    <text evidence="1">Amino-acid biosynthesis; L-lysine biosynthesis via DAP pathway; (S)-tetrahydrodipicolinate from L-aspartate: step 3/4.</text>
</comment>
<comment type="subunit">
    <text evidence="1">Homotetramer; dimer of dimers.</text>
</comment>
<comment type="subcellular location">
    <subcellularLocation>
        <location evidence="1">Cytoplasm</location>
    </subcellularLocation>
</comment>
<comment type="similarity">
    <text evidence="1">Belongs to the DapA family.</text>
</comment>
<comment type="caution">
    <text evidence="2">Was originally thought to be a dihydrodipicolinate synthase (DHDPS), catalyzing the condensation of (S)-aspartate-beta-semialdehyde [(S)-ASA] and pyruvate to dihydrodipicolinate (DHDP). However, it was shown in E.coli that the product of the enzymatic reaction is not dihydrodipicolinate but in fact (4S)-4-hydroxy-2,3,4,5-tetrahydro-(2S)-dipicolinic acid (HTPA), and that the consecutive dehydration reaction leading to DHDP is not spontaneous but catalyzed by DapB.</text>
</comment>
<reference key="1">
    <citation type="submission" date="2007-06" db="EMBL/GenBank/DDBJ databases">
        <title>Complete sequence of Methanococcus aeolicus Nankai-3.</title>
        <authorList>
            <consortium name="US DOE Joint Genome Institute"/>
            <person name="Copeland A."/>
            <person name="Lucas S."/>
            <person name="Lapidus A."/>
            <person name="Barry K."/>
            <person name="Glavina del Rio T."/>
            <person name="Dalin E."/>
            <person name="Tice H."/>
            <person name="Pitluck S."/>
            <person name="Chain P."/>
            <person name="Malfatti S."/>
            <person name="Shin M."/>
            <person name="Vergez L."/>
            <person name="Schmutz J."/>
            <person name="Larimer F."/>
            <person name="Land M."/>
            <person name="Hauser L."/>
            <person name="Kyrpides N."/>
            <person name="Lykidis A."/>
            <person name="Sieprawska-Lupa M."/>
            <person name="Whitman W.B."/>
            <person name="Richardson P."/>
        </authorList>
    </citation>
    <scope>NUCLEOTIDE SEQUENCE [LARGE SCALE GENOMIC DNA]</scope>
    <source>
        <strain>ATCC BAA-1280 / DSM 17508 / OCM 812 / Nankai-3</strain>
    </source>
</reference>
<protein>
    <recommendedName>
        <fullName evidence="1">4-hydroxy-tetrahydrodipicolinate synthase</fullName>
        <shortName evidence="1">HTPA synthase</shortName>
        <ecNumber evidence="1">4.3.3.7</ecNumber>
    </recommendedName>
</protein>
<dbReference type="EC" id="4.3.3.7" evidence="1"/>
<dbReference type="EMBL" id="CP000743">
    <property type="protein sequence ID" value="ABR56489.1"/>
    <property type="molecule type" value="Genomic_DNA"/>
</dbReference>
<dbReference type="RefSeq" id="WP_011973621.1">
    <property type="nucleotide sequence ID" value="NC_009635.1"/>
</dbReference>
<dbReference type="SMR" id="A6UVG7"/>
<dbReference type="STRING" id="419665.Maeo_0908"/>
<dbReference type="GeneID" id="5327440"/>
<dbReference type="GeneID" id="75306002"/>
<dbReference type="KEGG" id="mae:Maeo_0908"/>
<dbReference type="eggNOG" id="arCOG04172">
    <property type="taxonomic scope" value="Archaea"/>
</dbReference>
<dbReference type="HOGENOM" id="CLU_049343_7_1_2"/>
<dbReference type="OrthoDB" id="33636at2157"/>
<dbReference type="UniPathway" id="UPA00034">
    <property type="reaction ID" value="UER00017"/>
</dbReference>
<dbReference type="Proteomes" id="UP000001106">
    <property type="component" value="Chromosome"/>
</dbReference>
<dbReference type="GO" id="GO:0005737">
    <property type="term" value="C:cytoplasm"/>
    <property type="evidence" value="ECO:0007669"/>
    <property type="project" value="UniProtKB-SubCell"/>
</dbReference>
<dbReference type="GO" id="GO:0008675">
    <property type="term" value="F:2-dehydro-3-deoxy-phosphogluconate aldolase activity"/>
    <property type="evidence" value="ECO:0007669"/>
    <property type="project" value="UniProtKB-ARBA"/>
</dbReference>
<dbReference type="GO" id="GO:0008840">
    <property type="term" value="F:4-hydroxy-tetrahydrodipicolinate synthase activity"/>
    <property type="evidence" value="ECO:0007669"/>
    <property type="project" value="UniProtKB-UniRule"/>
</dbReference>
<dbReference type="GO" id="GO:0019877">
    <property type="term" value="P:diaminopimelate biosynthetic process"/>
    <property type="evidence" value="ECO:0007669"/>
    <property type="project" value="UniProtKB-UniRule"/>
</dbReference>
<dbReference type="GO" id="GO:0009089">
    <property type="term" value="P:lysine biosynthetic process via diaminopimelate"/>
    <property type="evidence" value="ECO:0007669"/>
    <property type="project" value="UniProtKB-UniRule"/>
</dbReference>
<dbReference type="CDD" id="cd00950">
    <property type="entry name" value="DHDPS"/>
    <property type="match status" value="1"/>
</dbReference>
<dbReference type="Gene3D" id="3.20.20.70">
    <property type="entry name" value="Aldolase class I"/>
    <property type="match status" value="1"/>
</dbReference>
<dbReference type="HAMAP" id="MF_00418">
    <property type="entry name" value="DapA"/>
    <property type="match status" value="1"/>
</dbReference>
<dbReference type="InterPro" id="IPR013785">
    <property type="entry name" value="Aldolase_TIM"/>
</dbReference>
<dbReference type="InterPro" id="IPR005263">
    <property type="entry name" value="DapA"/>
</dbReference>
<dbReference type="InterPro" id="IPR002220">
    <property type="entry name" value="DapA-like"/>
</dbReference>
<dbReference type="InterPro" id="IPR020624">
    <property type="entry name" value="Schiff_base-form_aldolases_CS"/>
</dbReference>
<dbReference type="NCBIfam" id="TIGR00674">
    <property type="entry name" value="dapA"/>
    <property type="match status" value="1"/>
</dbReference>
<dbReference type="PANTHER" id="PTHR12128:SF66">
    <property type="entry name" value="4-HYDROXY-2-OXOGLUTARATE ALDOLASE, MITOCHONDRIAL"/>
    <property type="match status" value="1"/>
</dbReference>
<dbReference type="PANTHER" id="PTHR12128">
    <property type="entry name" value="DIHYDRODIPICOLINATE SYNTHASE"/>
    <property type="match status" value="1"/>
</dbReference>
<dbReference type="Pfam" id="PF00701">
    <property type="entry name" value="DHDPS"/>
    <property type="match status" value="1"/>
</dbReference>
<dbReference type="PIRSF" id="PIRSF001365">
    <property type="entry name" value="DHDPS"/>
    <property type="match status" value="1"/>
</dbReference>
<dbReference type="PRINTS" id="PR00146">
    <property type="entry name" value="DHPICSNTHASE"/>
</dbReference>
<dbReference type="SMART" id="SM01130">
    <property type="entry name" value="DHDPS"/>
    <property type="match status" value="1"/>
</dbReference>
<dbReference type="SUPFAM" id="SSF51569">
    <property type="entry name" value="Aldolase"/>
    <property type="match status" value="1"/>
</dbReference>
<dbReference type="PROSITE" id="PS00665">
    <property type="entry name" value="DHDPS_1"/>
    <property type="match status" value="1"/>
</dbReference>
<accession>A6UVG7</accession>
<proteinExistence type="inferred from homology"/>